<comment type="function">
    <text evidence="3">In muscle, parvalbumin is thought to be involved in relaxation after contraction. It binds two calcium ions.</text>
</comment>
<comment type="PTM">
    <text evidence="6">The N-terminus is blocked.</text>
</comment>
<comment type="allergen">
    <text evidence="6 7">Causes an allergic reaction in human. Binds to IgE (PubMed:12842183, PubMed:28479332). Binds to IgE in 80% of 5 fish-allergic patients tested (PubMed:12842183).</text>
</comment>
<comment type="similarity">
    <text evidence="4">Belongs to the parvalbumin family.</text>
</comment>
<sequence length="109" mass="11531">MAFASVLKDAEITAALDGCKAAGSFDHKKFFKACGLSGKSADEVKKAFAIIDQDKSGYIEEEELKLFLQNFKAGARALSDAETKAFLKAGDSDGDGKIGVDEFAAMIKG</sequence>
<gene>
    <name evidence="11" type="primary">pvalb</name>
</gene>
<keyword id="KW-0007">Acetylation</keyword>
<keyword id="KW-0020">Allergen</keyword>
<keyword id="KW-0106">Calcium</keyword>
<keyword id="KW-0903">Direct protein sequencing</keyword>
<keyword id="KW-0479">Metal-binding</keyword>
<keyword id="KW-0514">Muscle protein</keyword>
<keyword id="KW-0677">Repeat</keyword>
<reference evidence="10" key="1">
    <citation type="submission" date="2009-02" db="EMBL/GenBank/DDBJ databases">
        <title>IgE reactivity to different alpha- and beta-parvalbumins in fish allergic patients.</title>
        <authorList>
            <person name="Kuehn A."/>
            <person name="Hilger C."/>
            <person name="Hentges F."/>
        </authorList>
    </citation>
    <scope>NUCLEOTIDE SEQUENCE [MRNA]</scope>
    <source>
        <tissue evidence="10">Muscle</tissue>
    </source>
</reference>
<reference evidence="11" key="2">
    <citation type="submission" date="2009-08" db="EMBL/GenBank/DDBJ databases">
        <title>Rapid fish detection and fish identification in food using parvalbumin-specific PCR.</title>
        <authorList>
            <person name="Kuehn A."/>
            <person name="Graf T."/>
            <person name="Hilger C."/>
            <person name="Hentges F."/>
        </authorList>
    </citation>
    <scope>NUCLEOTIDE SEQUENCE [GENOMIC DNA]</scope>
    <source>
        <tissue evidence="11">Muscle</tissue>
    </source>
</reference>
<reference key="3">
    <citation type="journal article" date="2003" name="Food Chem. Toxicol.">
        <title>Purification, reactivity with IgE and cDNA cloning of parvalbumin as the major allergen of mackerels.</title>
        <authorList>
            <person name="Hamada Y."/>
            <person name="Tanaka H."/>
            <person name="Ishizaki S."/>
            <person name="Ishida M."/>
            <person name="Nagashima Y."/>
            <person name="Shiomi K."/>
        </authorList>
    </citation>
    <scope>PROTEIN SEQUENCE OF 21-28; 56-65 AND 98-106</scope>
    <scope>PTM</scope>
    <scope>ALLERGEN</scope>
</reference>
<reference evidence="9" key="4">
    <citation type="journal article" date="2017" name="J. Allergy Clin. Immunol.">
        <title>Cross-reactivity in Fish Allergy: A Double-Blind Placebo-Controlled Food Challenge Trial.</title>
        <authorList>
            <person name="Soerensen M."/>
            <person name="Kuehn A."/>
            <person name="Mills E.N.C."/>
            <person name="Costello C.A."/>
            <person name="Ollert M."/>
            <person name="Smaabrekke L."/>
            <person name="Primicerio R."/>
            <person name="Wickman M."/>
            <person name="Klingenberg C."/>
        </authorList>
    </citation>
    <scope>ALLERGEN</scope>
</reference>
<protein>
    <recommendedName>
        <fullName evidence="11">Parvalbumin beta</fullName>
    </recommendedName>
    <allergenName evidence="8">Sco s 1</allergenName>
</protein>
<organism evidence="10">
    <name type="scientific">Scomber scombrus</name>
    <name type="common">Atlantic mackerel</name>
    <name type="synonym">Scomber vernalis</name>
    <dbReference type="NCBI Taxonomy" id="13677"/>
    <lineage>
        <taxon>Eukaryota</taxon>
        <taxon>Metazoa</taxon>
        <taxon>Chordata</taxon>
        <taxon>Craniata</taxon>
        <taxon>Vertebrata</taxon>
        <taxon>Euteleostomi</taxon>
        <taxon>Actinopterygii</taxon>
        <taxon>Neopterygii</taxon>
        <taxon>Teleostei</taxon>
        <taxon>Neoteleostei</taxon>
        <taxon>Acanthomorphata</taxon>
        <taxon>Pelagiaria</taxon>
        <taxon>Scombriformes</taxon>
        <taxon>Scombridae</taxon>
        <taxon>Scomber</taxon>
    </lineage>
</organism>
<accession>D3GME4</accession>
<accession>E0WD95</accession>
<evidence type="ECO:0000250" key="1">
    <source>
        <dbReference type="UniProtKB" id="P02621"/>
    </source>
</evidence>
<evidence type="ECO:0000250" key="2">
    <source>
        <dbReference type="UniProtKB" id="P09227"/>
    </source>
</evidence>
<evidence type="ECO:0000250" key="3">
    <source>
        <dbReference type="UniProtKB" id="P86431"/>
    </source>
</evidence>
<evidence type="ECO:0000255" key="4"/>
<evidence type="ECO:0000255" key="5">
    <source>
        <dbReference type="PROSITE-ProRule" id="PRU00448"/>
    </source>
</evidence>
<evidence type="ECO:0000269" key="6">
    <source>
    </source>
</evidence>
<evidence type="ECO:0000269" key="7">
    <source>
    </source>
</evidence>
<evidence type="ECO:0000303" key="8">
    <source>
    </source>
</evidence>
<evidence type="ECO:0000305" key="9"/>
<evidence type="ECO:0000312" key="10">
    <source>
        <dbReference type="EMBL" id="CAX32965.1"/>
    </source>
</evidence>
<evidence type="ECO:0000312" key="11">
    <source>
        <dbReference type="EMBL" id="CBA35346.1"/>
    </source>
</evidence>
<proteinExistence type="evidence at protein level"/>
<dbReference type="EMBL" id="FM994926">
    <property type="protein sequence ID" value="CAX32965.1"/>
    <property type="molecule type" value="mRNA"/>
</dbReference>
<dbReference type="EMBL" id="FN544077">
    <property type="protein sequence ID" value="CBA35346.1"/>
    <property type="molecule type" value="Genomic_DNA"/>
</dbReference>
<dbReference type="SMR" id="D3GME4"/>
<dbReference type="Allergome" id="1098">
    <property type="allergen name" value="Sco s 1"/>
</dbReference>
<dbReference type="Allergome" id="6118">
    <property type="allergen name" value="Sco s 1.0101"/>
</dbReference>
<dbReference type="GO" id="GO:0005737">
    <property type="term" value="C:cytoplasm"/>
    <property type="evidence" value="ECO:0007669"/>
    <property type="project" value="TreeGrafter"/>
</dbReference>
<dbReference type="GO" id="GO:0005509">
    <property type="term" value="F:calcium ion binding"/>
    <property type="evidence" value="ECO:0000250"/>
    <property type="project" value="UniProtKB"/>
</dbReference>
<dbReference type="CDD" id="cd16255">
    <property type="entry name" value="EFh_parvalbumin_beta"/>
    <property type="match status" value="1"/>
</dbReference>
<dbReference type="FunFam" id="1.10.238.10:FF:000060">
    <property type="entry name" value="Parvalbumin, thymic"/>
    <property type="match status" value="1"/>
</dbReference>
<dbReference type="Gene3D" id="1.10.238.10">
    <property type="entry name" value="EF-hand"/>
    <property type="match status" value="1"/>
</dbReference>
<dbReference type="InterPro" id="IPR011992">
    <property type="entry name" value="EF-hand-dom_pair"/>
</dbReference>
<dbReference type="InterPro" id="IPR018247">
    <property type="entry name" value="EF_Hand_1_Ca_BS"/>
</dbReference>
<dbReference type="InterPro" id="IPR002048">
    <property type="entry name" value="EF_hand_dom"/>
</dbReference>
<dbReference type="InterPro" id="IPR008080">
    <property type="entry name" value="Parvalbumin"/>
</dbReference>
<dbReference type="PANTHER" id="PTHR11653:SF12">
    <property type="entry name" value="PARVALBUMIN"/>
    <property type="match status" value="1"/>
</dbReference>
<dbReference type="PANTHER" id="PTHR11653">
    <property type="entry name" value="PARVALBUMIN ALPHA"/>
    <property type="match status" value="1"/>
</dbReference>
<dbReference type="Pfam" id="PF13499">
    <property type="entry name" value="EF-hand_7"/>
    <property type="match status" value="1"/>
</dbReference>
<dbReference type="PRINTS" id="PR01697">
    <property type="entry name" value="PARVALBUMIN"/>
</dbReference>
<dbReference type="SMART" id="SM00054">
    <property type="entry name" value="EFh"/>
    <property type="match status" value="2"/>
</dbReference>
<dbReference type="SUPFAM" id="SSF47473">
    <property type="entry name" value="EF-hand"/>
    <property type="match status" value="1"/>
</dbReference>
<dbReference type="PROSITE" id="PS00018">
    <property type="entry name" value="EF_HAND_1"/>
    <property type="match status" value="2"/>
</dbReference>
<dbReference type="PROSITE" id="PS50222">
    <property type="entry name" value="EF_HAND_2"/>
    <property type="match status" value="2"/>
</dbReference>
<name>PRVB_SCOSC</name>
<feature type="initiator methionine" description="Removed" evidence="2">
    <location>
        <position position="1"/>
    </location>
</feature>
<feature type="chain" id="PRO_0000441099" description="Parvalbumin beta" evidence="9">
    <location>
        <begin position="2"/>
        <end position="109"/>
    </location>
</feature>
<feature type="domain" description="EF-hand 1" evidence="5">
    <location>
        <begin position="39"/>
        <end position="74"/>
    </location>
</feature>
<feature type="domain" description="EF-hand 2" evidence="5">
    <location>
        <begin position="78"/>
        <end position="109"/>
    </location>
</feature>
<feature type="binding site" evidence="1 5">
    <location>
        <position position="52"/>
    </location>
    <ligand>
        <name>Ca(2+)</name>
        <dbReference type="ChEBI" id="CHEBI:29108"/>
        <label>1</label>
    </ligand>
</feature>
<feature type="binding site" evidence="1 5">
    <location>
        <position position="54"/>
    </location>
    <ligand>
        <name>Ca(2+)</name>
        <dbReference type="ChEBI" id="CHEBI:29108"/>
        <label>1</label>
    </ligand>
</feature>
<feature type="binding site" evidence="1 5">
    <location>
        <position position="56"/>
    </location>
    <ligand>
        <name>Ca(2+)</name>
        <dbReference type="ChEBI" id="CHEBI:29108"/>
        <label>1</label>
    </ligand>
</feature>
<feature type="binding site" evidence="1 5">
    <location>
        <position position="58"/>
    </location>
    <ligand>
        <name>Ca(2+)</name>
        <dbReference type="ChEBI" id="CHEBI:29108"/>
        <label>1</label>
    </ligand>
</feature>
<feature type="binding site" evidence="1">
    <location>
        <position position="60"/>
    </location>
    <ligand>
        <name>Ca(2+)</name>
        <dbReference type="ChEBI" id="CHEBI:29108"/>
        <label>1</label>
    </ligand>
</feature>
<feature type="binding site" evidence="1 5">
    <location>
        <position position="63"/>
    </location>
    <ligand>
        <name>Ca(2+)</name>
        <dbReference type="ChEBI" id="CHEBI:29108"/>
        <label>1</label>
    </ligand>
</feature>
<feature type="binding site" evidence="1 5">
    <location>
        <position position="91"/>
    </location>
    <ligand>
        <name>Ca(2+)</name>
        <dbReference type="ChEBI" id="CHEBI:29108"/>
        <label>2</label>
    </ligand>
</feature>
<feature type="binding site" evidence="1 5">
    <location>
        <position position="93"/>
    </location>
    <ligand>
        <name>Ca(2+)</name>
        <dbReference type="ChEBI" id="CHEBI:29108"/>
        <label>2</label>
    </ligand>
</feature>
<feature type="binding site" evidence="1 5">
    <location>
        <position position="95"/>
    </location>
    <ligand>
        <name>Ca(2+)</name>
        <dbReference type="ChEBI" id="CHEBI:29108"/>
        <label>2</label>
    </ligand>
</feature>
<feature type="binding site" evidence="5">
    <location>
        <position position="97"/>
    </location>
    <ligand>
        <name>Ca(2+)</name>
        <dbReference type="ChEBI" id="CHEBI:29108"/>
        <label>2</label>
    </ligand>
</feature>
<feature type="binding site" evidence="1 5">
    <location>
        <position position="102"/>
    </location>
    <ligand>
        <name>Ca(2+)</name>
        <dbReference type="ChEBI" id="CHEBI:29108"/>
        <label>2</label>
    </ligand>
</feature>
<feature type="modified residue" description="N-acetylalanine" evidence="1">
    <location>
        <position position="2"/>
    </location>
</feature>
<feature type="sequence conflict" description="In Ref. 2; CBA35346." evidence="9" ref="2">
    <original>K</original>
    <variation>E</variation>
    <location>
        <position position="84"/>
    </location>
</feature>
<feature type="sequence conflict" description="In Ref. 2; CBA35346." evidence="9" ref="2">
    <original>A</original>
    <variation>S</variation>
    <location>
        <position position="105"/>
    </location>
</feature>